<evidence type="ECO:0000250" key="1">
    <source>
        <dbReference type="UniProtKB" id="P31039"/>
    </source>
</evidence>
<evidence type="ECO:0000250" key="2">
    <source>
        <dbReference type="UniProtKB" id="P31040"/>
    </source>
</evidence>
<evidence type="ECO:0000250" key="3">
    <source>
        <dbReference type="UniProtKB" id="Q8K2B3"/>
    </source>
</evidence>
<evidence type="ECO:0000250" key="4">
    <source>
        <dbReference type="UniProtKB" id="Q9YHT1"/>
    </source>
</evidence>
<evidence type="ECO:0000269" key="5">
    <source>
    </source>
</evidence>
<evidence type="ECO:0000269" key="6">
    <source>
    </source>
</evidence>
<evidence type="ECO:0000305" key="7"/>
<evidence type="ECO:0000305" key="8">
    <source>
    </source>
</evidence>
<evidence type="ECO:0007829" key="9">
    <source>
        <dbReference type="PDB" id="1ZOY"/>
    </source>
</evidence>
<evidence type="ECO:0007829" key="10">
    <source>
        <dbReference type="PDB" id="3AE1"/>
    </source>
</evidence>
<evidence type="ECO:0007829" key="11">
    <source>
        <dbReference type="PDB" id="3AE2"/>
    </source>
</evidence>
<evidence type="ECO:0007829" key="12">
    <source>
        <dbReference type="PDB" id="3AE6"/>
    </source>
</evidence>
<evidence type="ECO:0007829" key="13">
    <source>
        <dbReference type="PDB" id="3AEF"/>
    </source>
</evidence>
<evidence type="ECO:0007829" key="14">
    <source>
        <dbReference type="PDB" id="3SFD"/>
    </source>
</evidence>
<evidence type="ECO:0007829" key="15">
    <source>
        <dbReference type="PDB" id="4YXD"/>
    </source>
</evidence>
<comment type="function">
    <text evidence="1 2 8">Flavoprotein (FP) subunit of succinate dehydrogenase (SDH) that is involved in complex II of the mitochondrial electron transport chain and is responsible for transferring electrons from succinate to ubiquinone (coenzyme Q) (Probable) (PubMed:15989954). SDH also oxidizes malate to the non-canonical enol form of oxaloacetate, enol-oxaloacetate (By similarity). Enol-oxaloacetate, which is a potent inhibitor of the succinate dehydrogenase activity, is further isomerized into keto-oxaloacetate (By similarity). Can act as a tumor suppressor (By similarity).</text>
</comment>
<comment type="catalytic activity">
    <reaction evidence="8">
        <text>a ubiquinone + succinate = a ubiquinol + fumarate</text>
        <dbReference type="Rhea" id="RHEA:13713"/>
        <dbReference type="Rhea" id="RHEA-COMP:9565"/>
        <dbReference type="Rhea" id="RHEA-COMP:9566"/>
        <dbReference type="ChEBI" id="CHEBI:16389"/>
        <dbReference type="ChEBI" id="CHEBI:17976"/>
        <dbReference type="ChEBI" id="CHEBI:29806"/>
        <dbReference type="ChEBI" id="CHEBI:30031"/>
        <dbReference type="EC" id="1.3.5.1"/>
    </reaction>
</comment>
<comment type="catalytic activity">
    <reaction evidence="1">
        <text>(R)-malate + a quinone = enol-oxaloacetate + a quinol</text>
        <dbReference type="Rhea" id="RHEA:79827"/>
        <dbReference type="ChEBI" id="CHEBI:15588"/>
        <dbReference type="ChEBI" id="CHEBI:17479"/>
        <dbReference type="ChEBI" id="CHEBI:24646"/>
        <dbReference type="ChEBI" id="CHEBI:132124"/>
    </reaction>
    <physiologicalReaction direction="left-to-right" evidence="1">
        <dbReference type="Rhea" id="RHEA:79828"/>
    </physiologicalReaction>
</comment>
<comment type="catalytic activity">
    <reaction evidence="1">
        <text>(S)-malate + a quinone = enol-oxaloacetate + a quinol</text>
        <dbReference type="Rhea" id="RHEA:79831"/>
        <dbReference type="ChEBI" id="CHEBI:15589"/>
        <dbReference type="ChEBI" id="CHEBI:17479"/>
        <dbReference type="ChEBI" id="CHEBI:24646"/>
        <dbReference type="ChEBI" id="CHEBI:132124"/>
    </reaction>
    <physiologicalReaction direction="left-to-right" evidence="1">
        <dbReference type="Rhea" id="RHEA:79832"/>
    </physiologicalReaction>
</comment>
<comment type="cofactor">
    <cofactor evidence="5">
        <name>FAD</name>
        <dbReference type="ChEBI" id="CHEBI:57692"/>
    </cofactor>
</comment>
<comment type="activity regulation">
    <text evidence="1">Enol-oxaloacetate inhibits the succinate dehydrogenase activity.</text>
</comment>
<comment type="pathway">
    <text evidence="8">Carbohydrate metabolism; tricarboxylic acid cycle; fumarate from succinate (eukaryal route): step 1/1.</text>
</comment>
<comment type="subunit">
    <text evidence="2 5 6">Component of complex II composed of four subunits: the flavoprotein (FP) SDHA, iron-sulfur protein (IP) SDHB, and a cytochrome b560 composed of SDHC and SDHD (PubMed:15989954, PubMed:17480203). Interacts with SDHAF2/SDH5; interaction is required for FAD attachment (By similarity). Interacts with TRAP1 (By similarity). Interacts with LACC1 (By similarity).</text>
</comment>
<comment type="subcellular location">
    <subcellularLocation>
        <location evidence="6">Mitochondrion inner membrane</location>
        <topology evidence="6">Peripheral membrane protein</topology>
        <orientation evidence="6">Matrix side</orientation>
    </subcellularLocation>
</comment>
<comment type="PTM">
    <text evidence="2">Phosphorylation at Tyr-215 is important for efficient electron transfer in complex II and the prevention of ROS generation.</text>
</comment>
<comment type="PTM">
    <text evidence="3">Acetylated. Deacetylated by SIRT3.</text>
</comment>
<comment type="similarity">
    <text evidence="7">Belongs to the FAD-dependent oxidoreductase 2 family. FRD/SDH subfamily.</text>
</comment>
<comment type="sequence caution" evidence="7">
    <conflict type="erroneous initiation">
        <sequence resource="EMBL-CDS" id="ABI29191"/>
    </conflict>
</comment>
<reference key="1">
    <citation type="journal article" date="2007" name="FEBS J.">
        <title>Preliminary molecular characterization and crystallization of mitochondrial respiratory complex II from porcine heart.</title>
        <authorList>
            <person name="Huo X."/>
            <person name="Su D."/>
            <person name="Wang A."/>
            <person name="Zhai Y."/>
            <person name="Xu J."/>
            <person name="Li X."/>
            <person name="Bartlam M."/>
            <person name="Sun F."/>
            <person name="Rao Z."/>
        </authorList>
    </citation>
    <scope>NUCLEOTIDE SEQUENCE [MRNA]</scope>
    <scope>PROTEIN SEQUENCE OF 43-47</scope>
    <scope>SUBUNIT</scope>
    <scope>SUBCELLULAR LOCATION</scope>
    <source>
        <tissue>Heart</tissue>
    </source>
</reference>
<reference key="2">
    <citation type="journal article" date="2006" name="Mol. Biol. Evol.">
        <title>Housekeeping genes for phylogenetic analysis of eutherian relationships.</title>
        <authorList>
            <person name="Kullberg M."/>
            <person name="Nilsson M.A."/>
            <person name="Arnason U."/>
            <person name="Harley E.H."/>
            <person name="Janke A."/>
        </authorList>
    </citation>
    <scope>NUCLEOTIDE SEQUENCE [MRNA] OF 59-599</scope>
    <source>
        <tissue>Liver</tissue>
    </source>
</reference>
<reference key="3">
    <citation type="journal article" date="2007" name="BMC Mol. Biol.">
        <title>Selection of reference genes for gene expression studies in pig tissues using SYBR green qPCR.</title>
        <authorList>
            <person name="Nygard A.B."/>
            <person name="Jorgensen C.B."/>
            <person name="Cirera S."/>
            <person name="Fredholm M."/>
        </authorList>
    </citation>
    <scope>NUCLEOTIDE SEQUENCE [MRNA] OF 165-663</scope>
</reference>
<reference key="4">
    <citation type="journal article" date="2005" name="Cell">
        <title>Crystal structure of mitochondrial respiratory membrane protein complex II.</title>
        <authorList>
            <person name="Sun F."/>
            <person name="Huo X."/>
            <person name="Zhai Y."/>
            <person name="Wang A."/>
            <person name="Xu J."/>
            <person name="Su D."/>
            <person name="Bartlam M."/>
            <person name="Rao Z."/>
        </authorList>
    </citation>
    <scope>X-RAY CRYSTALLOGRAPHY (2.4 ANGSTROMS) IN COMPLEX WITH FAD AND SUBSTRATE ANALOG 3-NITROPROPIONATE</scope>
    <scope>FUNCTION</scope>
    <scope>CATALYTIC ACTIVITY</scope>
    <scope>PATHWAY</scope>
    <scope>COFACTOR</scope>
    <scope>SUBUNIT</scope>
</reference>
<sequence>MSGVRAVSRLLRARRLALTWAQPAASPIGARSFHFTVDGNKRSSAKVSDAISTQYPVVDHEFDAVVVGAGGAGLRAAFGLSEAGFNTACVTKLFPTRSHTVAAQGGINAALGNMEEDNWRWHFYDTVKGSDWLGDQDAIHYMTEQAPASVVELENYGMPFSRTEDGKIYQRAFGGQSLKFGKGGQAHRCCCVADRTGHSLLHTLYGRSLRYDTSYFVEYFALDLLMENGECRGVIALCIEDGSIHRIRARNTVVATGGYGRTYFSCTSAHTSTGDGTAMVTRAGLPCQDLEFVQFHPTGIYGAGCLITEGCRGEGGILINSQGERFMERYAPVAKDLASRDVVSRSMTLEIREGRGCGPEKDHVYLQLHHLPPEQLAVRLPGISETAMIFAGVDVTKEPIPVLPTVHYNMGGIPTNYKGQVLRHVNGQDQVVPGLYACGEAACASVHGANRLGANSLLDLVVFGRACALSIAESCRPGDKVPSIKPNAGEESVMNLDKLRFANGTIRTSELRLSMQKSMQSHAAVFRVGSVLQEGCEKILRLYGDLQHLKTFDRGMVWNTDLVETLELQNLMLCALQTIYGAEARKESRGAHAREDFKERVDEYDYSKPIQGQQKKPFQEHWRKHTLSYVDVKTGKVSLEYRPVIDKTLNEADCATVPPAIRSY</sequence>
<protein>
    <recommendedName>
        <fullName>Succinate dehydrogenase [ubiquinone] flavoprotein subunit, mitochondrial</fullName>
        <ecNumber evidence="8">1.3.5.1</ecNumber>
    </recommendedName>
    <alternativeName>
        <fullName>Flavoprotein subunit of complex II</fullName>
        <shortName>Fp</shortName>
    </alternativeName>
    <alternativeName>
        <fullName>Malate dehydrogenase [quinone] flavoprotein subunit</fullName>
        <ecNumber evidence="1">1.1.5.-</ecNumber>
    </alternativeName>
</protein>
<organism>
    <name type="scientific">Sus scrofa</name>
    <name type="common">Pig</name>
    <dbReference type="NCBI Taxonomy" id="9823"/>
    <lineage>
        <taxon>Eukaryota</taxon>
        <taxon>Metazoa</taxon>
        <taxon>Chordata</taxon>
        <taxon>Craniata</taxon>
        <taxon>Vertebrata</taxon>
        <taxon>Euteleostomi</taxon>
        <taxon>Mammalia</taxon>
        <taxon>Eutheria</taxon>
        <taxon>Laurasiatheria</taxon>
        <taxon>Artiodactyla</taxon>
        <taxon>Suina</taxon>
        <taxon>Suidae</taxon>
        <taxon>Sus</taxon>
    </lineage>
</organism>
<proteinExistence type="evidence at protein level"/>
<keyword id="KW-0002">3D-structure</keyword>
<keyword id="KW-0007">Acetylation</keyword>
<keyword id="KW-0903">Direct protein sequencing</keyword>
<keyword id="KW-0249">Electron transport</keyword>
<keyword id="KW-0274">FAD</keyword>
<keyword id="KW-0285">Flavoprotein</keyword>
<keyword id="KW-0472">Membrane</keyword>
<keyword id="KW-0496">Mitochondrion</keyword>
<keyword id="KW-0999">Mitochondrion inner membrane</keyword>
<keyword id="KW-0560">Oxidoreductase</keyword>
<keyword id="KW-0597">Phosphoprotein</keyword>
<keyword id="KW-1185">Reference proteome</keyword>
<keyword id="KW-0809">Transit peptide</keyword>
<keyword id="KW-0813">Transport</keyword>
<keyword id="KW-0816">Tricarboxylic acid cycle</keyword>
<keyword id="KW-0043">Tumor suppressor</keyword>
<dbReference type="EC" id="1.3.5.1" evidence="8"/>
<dbReference type="EC" id="1.1.5.-" evidence="1"/>
<dbReference type="EMBL" id="DQ402993">
    <property type="protein sequence ID" value="ABD77326.1"/>
    <property type="molecule type" value="mRNA"/>
</dbReference>
<dbReference type="EMBL" id="DQ845177">
    <property type="protein sequence ID" value="ABI29191.1"/>
    <property type="status" value="ALT_INIT"/>
    <property type="molecule type" value="mRNA"/>
</dbReference>
<dbReference type="RefSeq" id="XP_020932590.1">
    <property type="nucleotide sequence ID" value="XM_021076931.1"/>
</dbReference>
<dbReference type="PDB" id="1ZOY">
    <property type="method" value="X-ray"/>
    <property type="resolution" value="2.40 A"/>
    <property type="chains" value="A=43-664"/>
</dbReference>
<dbReference type="PDB" id="1ZP0">
    <property type="method" value="X-ray"/>
    <property type="resolution" value="3.50 A"/>
    <property type="chains" value="A=43-664"/>
</dbReference>
<dbReference type="PDB" id="3ABV">
    <property type="method" value="X-ray"/>
    <property type="resolution" value="3.24 A"/>
    <property type="chains" value="A=43-664"/>
</dbReference>
<dbReference type="PDB" id="3AE1">
    <property type="method" value="X-ray"/>
    <property type="resolution" value="3.14 A"/>
    <property type="chains" value="A=43-664"/>
</dbReference>
<dbReference type="PDB" id="3AE2">
    <property type="method" value="X-ray"/>
    <property type="resolution" value="3.10 A"/>
    <property type="chains" value="A=43-664"/>
</dbReference>
<dbReference type="PDB" id="3AE3">
    <property type="method" value="X-ray"/>
    <property type="resolution" value="3.35 A"/>
    <property type="chains" value="A=43-664"/>
</dbReference>
<dbReference type="PDB" id="3AE4">
    <property type="method" value="X-ray"/>
    <property type="resolution" value="2.91 A"/>
    <property type="chains" value="A=43-664"/>
</dbReference>
<dbReference type="PDB" id="3AE5">
    <property type="method" value="X-ray"/>
    <property type="resolution" value="3.41 A"/>
    <property type="chains" value="A=43-664"/>
</dbReference>
<dbReference type="PDB" id="3AE6">
    <property type="method" value="X-ray"/>
    <property type="resolution" value="3.40 A"/>
    <property type="chains" value="A=43-664"/>
</dbReference>
<dbReference type="PDB" id="3AE7">
    <property type="method" value="X-ray"/>
    <property type="resolution" value="3.62 A"/>
    <property type="chains" value="A=43-664"/>
</dbReference>
<dbReference type="PDB" id="3AE8">
    <property type="method" value="X-ray"/>
    <property type="resolution" value="3.40 A"/>
    <property type="chains" value="A=43-664"/>
</dbReference>
<dbReference type="PDB" id="3AE9">
    <property type="method" value="X-ray"/>
    <property type="resolution" value="3.31 A"/>
    <property type="chains" value="A=43-664"/>
</dbReference>
<dbReference type="PDB" id="3AEA">
    <property type="method" value="X-ray"/>
    <property type="resolution" value="3.39 A"/>
    <property type="chains" value="A=43-664"/>
</dbReference>
<dbReference type="PDB" id="3AEB">
    <property type="method" value="X-ray"/>
    <property type="resolution" value="3.00 A"/>
    <property type="chains" value="A=43-664"/>
</dbReference>
<dbReference type="PDB" id="3AEC">
    <property type="method" value="X-ray"/>
    <property type="resolution" value="3.61 A"/>
    <property type="chains" value="A=43-664"/>
</dbReference>
<dbReference type="PDB" id="3AED">
    <property type="method" value="X-ray"/>
    <property type="resolution" value="3.52 A"/>
    <property type="chains" value="A=43-664"/>
</dbReference>
<dbReference type="PDB" id="3AEE">
    <property type="method" value="X-ray"/>
    <property type="resolution" value="3.22 A"/>
    <property type="chains" value="A=43-664"/>
</dbReference>
<dbReference type="PDB" id="3AEF">
    <property type="method" value="X-ray"/>
    <property type="resolution" value="2.80 A"/>
    <property type="chains" value="A=43-664"/>
</dbReference>
<dbReference type="PDB" id="3AEG">
    <property type="method" value="X-ray"/>
    <property type="resolution" value="3.27 A"/>
    <property type="chains" value="A=43-664"/>
</dbReference>
<dbReference type="PDB" id="3SFD">
    <property type="method" value="X-ray"/>
    <property type="resolution" value="2.61 A"/>
    <property type="chains" value="A=43-664"/>
</dbReference>
<dbReference type="PDB" id="3SFE">
    <property type="method" value="X-ray"/>
    <property type="resolution" value="2.81 A"/>
    <property type="chains" value="A=43-664"/>
</dbReference>
<dbReference type="PDB" id="4YTP">
    <property type="method" value="X-ray"/>
    <property type="resolution" value="3.10 A"/>
    <property type="chains" value="A=1-664"/>
</dbReference>
<dbReference type="PDB" id="4YXD">
    <property type="method" value="X-ray"/>
    <property type="resolution" value="3.00 A"/>
    <property type="chains" value="A=1-664"/>
</dbReference>
<dbReference type="PDBsum" id="1ZOY"/>
<dbReference type="PDBsum" id="1ZP0"/>
<dbReference type="PDBsum" id="3ABV"/>
<dbReference type="PDBsum" id="3AE1"/>
<dbReference type="PDBsum" id="3AE2"/>
<dbReference type="PDBsum" id="3AE3"/>
<dbReference type="PDBsum" id="3AE4"/>
<dbReference type="PDBsum" id="3AE5"/>
<dbReference type="PDBsum" id="3AE6"/>
<dbReference type="PDBsum" id="3AE7"/>
<dbReference type="PDBsum" id="3AE8"/>
<dbReference type="PDBsum" id="3AE9"/>
<dbReference type="PDBsum" id="3AEA"/>
<dbReference type="PDBsum" id="3AEB"/>
<dbReference type="PDBsum" id="3AEC"/>
<dbReference type="PDBsum" id="3AED"/>
<dbReference type="PDBsum" id="3AEE"/>
<dbReference type="PDBsum" id="3AEF"/>
<dbReference type="PDBsum" id="3AEG"/>
<dbReference type="PDBsum" id="3SFD"/>
<dbReference type="PDBsum" id="3SFE"/>
<dbReference type="PDBsum" id="4YTP"/>
<dbReference type="PDBsum" id="4YXD"/>
<dbReference type="SMR" id="Q0QF01"/>
<dbReference type="FunCoup" id="Q0QF01">
    <property type="interactions" value="847"/>
</dbReference>
<dbReference type="STRING" id="9823.ENSSSCP00000026945"/>
<dbReference type="PeptideAtlas" id="Q0QF01"/>
<dbReference type="Ensembl" id="ENSSSCT00000031591.3">
    <property type="protein sequence ID" value="ENSSSCP00000026945.2"/>
    <property type="gene ID" value="ENSSSCG00000020686.4"/>
</dbReference>
<dbReference type="Ensembl" id="ENSSSCT00015035859.1">
    <property type="protein sequence ID" value="ENSSSCP00015014270.1"/>
    <property type="gene ID" value="ENSSSCG00015026639.1"/>
</dbReference>
<dbReference type="Ensembl" id="ENSSSCT00025042442.1">
    <property type="protein sequence ID" value="ENSSSCP00025018064.1"/>
    <property type="gene ID" value="ENSSSCG00025031010.1"/>
</dbReference>
<dbReference type="Ensembl" id="ENSSSCT00030061501.1">
    <property type="protein sequence ID" value="ENSSSCP00030028123.1"/>
    <property type="gene ID" value="ENSSSCG00030043981.1"/>
</dbReference>
<dbReference type="Ensembl" id="ENSSSCT00035020617.1">
    <property type="protein sequence ID" value="ENSSSCP00035007412.1"/>
    <property type="gene ID" value="ENSSSCG00035016133.1"/>
</dbReference>
<dbReference type="Ensembl" id="ENSSSCT00040063165.1">
    <property type="protein sequence ID" value="ENSSSCP00040026647.1"/>
    <property type="gene ID" value="ENSSSCG00040044535.1"/>
</dbReference>
<dbReference type="Ensembl" id="ENSSSCT00045051093.1">
    <property type="protein sequence ID" value="ENSSSCP00045035533.1"/>
    <property type="gene ID" value="ENSSSCG00045028783.1"/>
</dbReference>
<dbReference type="Ensembl" id="ENSSSCT00050066913.1">
    <property type="protein sequence ID" value="ENSSSCP00050028731.1"/>
    <property type="gene ID" value="ENSSSCG00050049167.1"/>
</dbReference>
<dbReference type="Ensembl" id="ENSSSCT00055029043.1">
    <property type="protein sequence ID" value="ENSSSCP00055023128.1"/>
    <property type="gene ID" value="ENSSSCG00055014552.1"/>
</dbReference>
<dbReference type="Ensembl" id="ENSSSCT00060007021.1">
    <property type="protein sequence ID" value="ENSSSCP00060002482.1"/>
    <property type="gene ID" value="ENSSSCG00060005542.1"/>
</dbReference>
<dbReference type="Ensembl" id="ENSSSCT00105056067">
    <property type="protein sequence ID" value="ENSSSCP00105039559"/>
    <property type="gene ID" value="ENSSSCG00105029310"/>
</dbReference>
<dbReference type="Ensembl" id="ENSSSCT00110071023">
    <property type="protein sequence ID" value="ENSSSCP00110049898"/>
    <property type="gene ID" value="ENSSSCG00110037322"/>
</dbReference>
<dbReference type="Ensembl" id="ENSSSCT00115016333">
    <property type="protein sequence ID" value="ENSSSCP00115015407"/>
    <property type="gene ID" value="ENSSSCG00115009127"/>
</dbReference>
<dbReference type="Ensembl" id="ENSSSCT00130007661">
    <property type="protein sequence ID" value="ENSSSCP00130005060"/>
    <property type="gene ID" value="ENSSSCG00130004158"/>
</dbReference>
<dbReference type="GeneID" id="780433"/>
<dbReference type="VGNC" id="VGNC:110673">
    <property type="gene designation" value="SDHA"/>
</dbReference>
<dbReference type="GeneTree" id="ENSGT00910000144277"/>
<dbReference type="InParanoid" id="Q0QF01"/>
<dbReference type="OMA" id="PTGIWRM"/>
<dbReference type="Reactome" id="R-SSC-71403">
    <property type="pathway name" value="Citric acid cycle (TCA cycle)"/>
</dbReference>
<dbReference type="Reactome" id="R-SSC-9854311">
    <property type="pathway name" value="Maturation of TCA enzymes and regulation of TCA cycle"/>
</dbReference>
<dbReference type="UniPathway" id="UPA00223">
    <property type="reaction ID" value="UER01006"/>
</dbReference>
<dbReference type="EvolutionaryTrace" id="Q0QF01"/>
<dbReference type="Proteomes" id="UP000008227">
    <property type="component" value="Chromosome 16"/>
</dbReference>
<dbReference type="Proteomes" id="UP000314985">
    <property type="component" value="Unplaced"/>
</dbReference>
<dbReference type="Proteomes" id="UP000694570">
    <property type="component" value="Unplaced"/>
</dbReference>
<dbReference type="Proteomes" id="UP000694571">
    <property type="component" value="Unplaced"/>
</dbReference>
<dbReference type="Proteomes" id="UP000694720">
    <property type="component" value="Unplaced"/>
</dbReference>
<dbReference type="Proteomes" id="UP000694722">
    <property type="component" value="Unplaced"/>
</dbReference>
<dbReference type="Proteomes" id="UP000694723">
    <property type="component" value="Unplaced"/>
</dbReference>
<dbReference type="Proteomes" id="UP000694724">
    <property type="component" value="Unplaced"/>
</dbReference>
<dbReference type="Proteomes" id="UP000694725">
    <property type="component" value="Unplaced"/>
</dbReference>
<dbReference type="Proteomes" id="UP000694726">
    <property type="component" value="Unplaced"/>
</dbReference>
<dbReference type="Proteomes" id="UP000694727">
    <property type="component" value="Unplaced"/>
</dbReference>
<dbReference type="Proteomes" id="UP000694728">
    <property type="component" value="Unplaced"/>
</dbReference>
<dbReference type="Bgee" id="ENSSSCG00000020686">
    <property type="expression patterns" value="Expressed in psoas major muscle and 43 other cell types or tissues"/>
</dbReference>
<dbReference type="ExpressionAtlas" id="Q0QF01">
    <property type="expression patterns" value="baseline and differential"/>
</dbReference>
<dbReference type="GO" id="GO:0005743">
    <property type="term" value="C:mitochondrial inner membrane"/>
    <property type="evidence" value="ECO:0000314"/>
    <property type="project" value="UniProtKB"/>
</dbReference>
<dbReference type="GO" id="GO:0005730">
    <property type="term" value="C:nucleolus"/>
    <property type="evidence" value="ECO:0007669"/>
    <property type="project" value="Ensembl"/>
</dbReference>
<dbReference type="GO" id="GO:0045273">
    <property type="term" value="C:respiratory chain complex II (succinate dehydrogenase)"/>
    <property type="evidence" value="ECO:0000314"/>
    <property type="project" value="UniProtKB"/>
</dbReference>
<dbReference type="GO" id="GO:0009055">
    <property type="term" value="F:electron transfer activity"/>
    <property type="evidence" value="ECO:0000318"/>
    <property type="project" value="GO_Central"/>
</dbReference>
<dbReference type="GO" id="GO:0050660">
    <property type="term" value="F:flavin adenine dinucleotide binding"/>
    <property type="evidence" value="ECO:0000318"/>
    <property type="project" value="GO_Central"/>
</dbReference>
<dbReference type="GO" id="GO:0008177">
    <property type="term" value="F:succinate dehydrogenase (quinone) activity"/>
    <property type="evidence" value="ECO:0000250"/>
    <property type="project" value="UniProtKB"/>
</dbReference>
<dbReference type="GO" id="GO:0006121">
    <property type="term" value="P:mitochondrial electron transport, succinate to ubiquinone"/>
    <property type="evidence" value="ECO:0000318"/>
    <property type="project" value="GO_Central"/>
</dbReference>
<dbReference type="GO" id="GO:0007399">
    <property type="term" value="P:nervous system development"/>
    <property type="evidence" value="ECO:0007669"/>
    <property type="project" value="Ensembl"/>
</dbReference>
<dbReference type="GO" id="GO:0006105">
    <property type="term" value="P:succinate metabolic process"/>
    <property type="evidence" value="ECO:0007669"/>
    <property type="project" value="Ensembl"/>
</dbReference>
<dbReference type="GO" id="GO:0006099">
    <property type="term" value="P:tricarboxylic acid cycle"/>
    <property type="evidence" value="ECO:0007669"/>
    <property type="project" value="UniProtKB-UniPathway"/>
</dbReference>
<dbReference type="FunFam" id="3.90.700.10:FF:000001">
    <property type="entry name" value="Mitochondrial succinate dehydrogenase flavoprotein subunit"/>
    <property type="match status" value="1"/>
</dbReference>
<dbReference type="FunFam" id="4.10.80.40:FF:000004">
    <property type="entry name" value="Succinate dehydrogenase [ubiquinone] flavoprotein subunit, mitochondrial"/>
    <property type="match status" value="1"/>
</dbReference>
<dbReference type="FunFam" id="3.50.50.60:FF:000482">
    <property type="entry name" value="Succinate dehydrogenase complex, subunit A, flavoprotein (Fp)"/>
    <property type="match status" value="1"/>
</dbReference>
<dbReference type="FunFam" id="3.50.50.60:FF:001062">
    <property type="entry name" value="Succinate dehydrogenase complex, subunit A, flavoprotein (Fp)"/>
    <property type="match status" value="1"/>
</dbReference>
<dbReference type="FunFam" id="1.20.58.100:FF:000001">
    <property type="entry name" value="Succinate dehydrogenase flavoprotein subunit (SdhA)"/>
    <property type="match status" value="1"/>
</dbReference>
<dbReference type="Gene3D" id="3.50.50.60">
    <property type="entry name" value="FAD/NAD(P)-binding domain"/>
    <property type="match status" value="1"/>
</dbReference>
<dbReference type="Gene3D" id="1.20.58.100">
    <property type="entry name" value="Fumarate reductase/succinate dehydrogenase flavoprotein-like, C-terminal domain"/>
    <property type="match status" value="1"/>
</dbReference>
<dbReference type="Gene3D" id="4.10.80.40">
    <property type="entry name" value="succinate dehydrogenase protein domain"/>
    <property type="match status" value="1"/>
</dbReference>
<dbReference type="Gene3D" id="3.90.700.10">
    <property type="entry name" value="Succinate dehydrogenase/fumarate reductase flavoprotein, catalytic domain"/>
    <property type="match status" value="1"/>
</dbReference>
<dbReference type="InterPro" id="IPR003953">
    <property type="entry name" value="FAD-dep_OxRdtase_2_FAD-bd"/>
</dbReference>
<dbReference type="InterPro" id="IPR036188">
    <property type="entry name" value="FAD/NAD-bd_sf"/>
</dbReference>
<dbReference type="InterPro" id="IPR003952">
    <property type="entry name" value="FRD_SDH_FAD_BS"/>
</dbReference>
<dbReference type="InterPro" id="IPR037099">
    <property type="entry name" value="Fum_R/Succ_DH_flav-like_C_sf"/>
</dbReference>
<dbReference type="InterPro" id="IPR015939">
    <property type="entry name" value="Fum_Rdtase/Succ_DH_flav-like_C"/>
</dbReference>
<dbReference type="InterPro" id="IPR030664">
    <property type="entry name" value="SdhA/FrdA/AprA"/>
</dbReference>
<dbReference type="InterPro" id="IPR027477">
    <property type="entry name" value="Succ_DH/fumarate_Rdtase_cat_sf"/>
</dbReference>
<dbReference type="InterPro" id="IPR011281">
    <property type="entry name" value="Succ_DH_flav_su_fwd"/>
</dbReference>
<dbReference type="InterPro" id="IPR014006">
    <property type="entry name" value="Succ_Dhase_FrdA_Gneg"/>
</dbReference>
<dbReference type="NCBIfam" id="TIGR01816">
    <property type="entry name" value="sdhA_forward"/>
    <property type="match status" value="1"/>
</dbReference>
<dbReference type="NCBIfam" id="TIGR01812">
    <property type="entry name" value="sdhA_frdA_Gneg"/>
    <property type="match status" value="1"/>
</dbReference>
<dbReference type="PANTHER" id="PTHR11632">
    <property type="entry name" value="SUCCINATE DEHYDROGENASE 2 FLAVOPROTEIN SUBUNIT"/>
    <property type="match status" value="1"/>
</dbReference>
<dbReference type="PANTHER" id="PTHR11632:SF51">
    <property type="entry name" value="SUCCINATE DEHYDROGENASE [UBIQUINONE] FLAVOPROTEIN SUBUNIT, MITOCHONDRIAL"/>
    <property type="match status" value="1"/>
</dbReference>
<dbReference type="Pfam" id="PF00890">
    <property type="entry name" value="FAD_binding_2"/>
    <property type="match status" value="1"/>
</dbReference>
<dbReference type="Pfam" id="PF02910">
    <property type="entry name" value="Succ_DH_flav_C"/>
    <property type="match status" value="1"/>
</dbReference>
<dbReference type="PIRSF" id="PIRSF000171">
    <property type="entry name" value="SDHA_APRA_LASPO"/>
    <property type="match status" value="1"/>
</dbReference>
<dbReference type="SUPFAM" id="SSF51905">
    <property type="entry name" value="FAD/NAD(P)-binding domain"/>
    <property type="match status" value="1"/>
</dbReference>
<dbReference type="SUPFAM" id="SSF46977">
    <property type="entry name" value="Succinate dehydrogenase/fumarate reductase flavoprotein C-terminal domain"/>
    <property type="match status" value="1"/>
</dbReference>
<dbReference type="SUPFAM" id="SSF56425">
    <property type="entry name" value="Succinate dehydrogenase/fumarate reductase flavoprotein, catalytic domain"/>
    <property type="match status" value="1"/>
</dbReference>
<dbReference type="PROSITE" id="PS00504">
    <property type="entry name" value="FRD_SDH_FAD_BINDING"/>
    <property type="match status" value="1"/>
</dbReference>
<gene>
    <name type="primary">SDHA</name>
</gene>
<accession>Q0QF01</accession>
<accession>A0SNV1</accession>
<feature type="transit peptide" description="Mitochondrion" evidence="6">
    <location>
        <begin position="1"/>
        <end position="42"/>
    </location>
</feature>
<feature type="chain" id="PRO_0000391718" description="Succinate dehydrogenase [ubiquinone] flavoprotein subunit, mitochondrial">
    <location>
        <begin position="43"/>
        <end position="664"/>
    </location>
</feature>
<feature type="active site" description="Proton acceptor" evidence="4">
    <location>
        <position position="340"/>
    </location>
</feature>
<feature type="binding site" evidence="5">
    <location>
        <position position="69"/>
    </location>
    <ligand>
        <name>FAD</name>
        <dbReference type="ChEBI" id="CHEBI:57692"/>
    </ligand>
</feature>
<feature type="binding site" evidence="5">
    <location>
        <position position="72"/>
    </location>
    <ligand>
        <name>FAD</name>
        <dbReference type="ChEBI" id="CHEBI:57692"/>
    </ligand>
</feature>
<feature type="binding site" evidence="5">
    <location>
        <position position="91"/>
    </location>
    <ligand>
        <name>FAD</name>
        <dbReference type="ChEBI" id="CHEBI:57692"/>
    </ligand>
</feature>
<feature type="binding site" evidence="5">
    <location>
        <position position="92"/>
    </location>
    <ligand>
        <name>FAD</name>
        <dbReference type="ChEBI" id="CHEBI:57692"/>
    </ligand>
</feature>
<feature type="binding site" evidence="5">
    <location>
        <position position="98"/>
    </location>
    <ligand>
        <name>FAD</name>
        <dbReference type="ChEBI" id="CHEBI:57692"/>
    </ligand>
</feature>
<feature type="binding site" evidence="5">
    <location>
        <position position="100"/>
    </location>
    <ligand>
        <name>FAD</name>
        <dbReference type="ChEBI" id="CHEBI:57692"/>
    </ligand>
</feature>
<feature type="binding site" evidence="5">
    <location>
        <position position="105"/>
    </location>
    <ligand>
        <name>FAD</name>
        <dbReference type="ChEBI" id="CHEBI:57692"/>
    </ligand>
</feature>
<feature type="binding site" evidence="5">
    <location>
        <position position="221"/>
    </location>
    <ligand>
        <name>FAD</name>
        <dbReference type="ChEBI" id="CHEBI:57692"/>
    </ligand>
</feature>
<feature type="binding site" evidence="5">
    <location>
        <position position="275"/>
    </location>
    <ligand>
        <name>FAD</name>
        <dbReference type="ChEBI" id="CHEBI:57692"/>
    </ligand>
</feature>
<feature type="binding site" evidence="5">
    <location>
        <position position="296"/>
    </location>
    <ligand>
        <name>oxaloacetate</name>
        <dbReference type="ChEBI" id="CHEBI:16452"/>
    </ligand>
</feature>
<feature type="binding site" evidence="5">
    <location>
        <position position="308"/>
    </location>
    <ligand>
        <name>oxaloacetate</name>
        <dbReference type="ChEBI" id="CHEBI:16452"/>
    </ligand>
</feature>
<feature type="binding site" evidence="5">
    <location>
        <position position="407"/>
    </location>
    <ligand>
        <name>oxaloacetate</name>
        <dbReference type="ChEBI" id="CHEBI:16452"/>
    </ligand>
</feature>
<feature type="binding site" evidence="5">
    <location>
        <position position="440"/>
    </location>
    <ligand>
        <name>FAD</name>
        <dbReference type="ChEBI" id="CHEBI:57692"/>
    </ligand>
</feature>
<feature type="binding site" evidence="5">
    <location>
        <position position="451"/>
    </location>
    <ligand>
        <name>oxaloacetate</name>
        <dbReference type="ChEBI" id="CHEBI:16452"/>
    </ligand>
</feature>
<feature type="binding site" evidence="5">
    <location>
        <position position="454"/>
    </location>
    <ligand>
        <name>oxaloacetate</name>
        <dbReference type="ChEBI" id="CHEBI:16452"/>
    </ligand>
</feature>
<feature type="binding site" evidence="5">
    <location>
        <position position="456"/>
    </location>
    <ligand>
        <name>FAD</name>
        <dbReference type="ChEBI" id="CHEBI:57692"/>
    </ligand>
</feature>
<feature type="binding site" evidence="5">
    <location>
        <position position="457"/>
    </location>
    <ligand>
        <name>FAD</name>
        <dbReference type="ChEBI" id="CHEBI:57692"/>
    </ligand>
</feature>
<feature type="modified residue" description="Tele-8alpha-FAD histidine" evidence="5">
    <location>
        <position position="99"/>
    </location>
</feature>
<feature type="modified residue" description="N6-acetyllysine" evidence="3">
    <location>
        <position position="167"/>
    </location>
</feature>
<feature type="modified residue" description="N6-acetyllysine; alternate" evidence="2">
    <location>
        <position position="179"/>
    </location>
</feature>
<feature type="modified residue" description="N6-succinyllysine; alternate" evidence="3">
    <location>
        <position position="179"/>
    </location>
</feature>
<feature type="modified residue" description="N6-acetyllysine" evidence="3">
    <location>
        <position position="182"/>
    </location>
</feature>
<feature type="modified residue" description="Phosphotyrosine; by SRC" evidence="2">
    <location>
        <position position="215"/>
    </location>
</feature>
<feature type="modified residue" description="N6-acetyllysine; alternate" evidence="2">
    <location>
        <position position="335"/>
    </location>
</feature>
<feature type="modified residue" description="N6-succinyllysine; alternate" evidence="3">
    <location>
        <position position="335"/>
    </location>
</feature>
<feature type="modified residue" description="N6-acetyllysine" evidence="3">
    <location>
        <position position="480"/>
    </location>
</feature>
<feature type="modified residue" description="N6-acetyllysine; alternate" evidence="3">
    <location>
        <position position="485"/>
    </location>
</feature>
<feature type="modified residue" description="N6-succinyllysine; alternate" evidence="3">
    <location>
        <position position="485"/>
    </location>
</feature>
<feature type="modified residue" description="N6-acetyllysine; alternate" evidence="3">
    <location>
        <position position="498"/>
    </location>
</feature>
<feature type="modified residue" description="N6-succinyllysine; alternate" evidence="3">
    <location>
        <position position="498"/>
    </location>
</feature>
<feature type="modified residue" description="N6-acetyllysine" evidence="3">
    <location>
        <position position="517"/>
    </location>
</feature>
<feature type="modified residue" description="N6-acetyllysine; alternate" evidence="3">
    <location>
        <position position="538"/>
    </location>
</feature>
<feature type="modified residue" description="N6-succinyllysine; alternate" evidence="3">
    <location>
        <position position="538"/>
    </location>
</feature>
<feature type="modified residue" description="N6-acetyllysine" evidence="3">
    <location>
        <position position="550"/>
    </location>
</feature>
<feature type="modified residue" description="N6-acetyllysine" evidence="3">
    <location>
        <position position="598"/>
    </location>
</feature>
<feature type="modified residue" description="N6-acetyllysine" evidence="2">
    <location>
        <position position="608"/>
    </location>
</feature>
<feature type="modified residue" description="N6-succinyllysine" evidence="3">
    <location>
        <position position="615"/>
    </location>
</feature>
<feature type="modified residue" description="N6-acetyllysine" evidence="3">
    <location>
        <position position="624"/>
    </location>
</feature>
<feature type="modified residue" description="N6-acetyllysine" evidence="3">
    <location>
        <position position="633"/>
    </location>
</feature>
<feature type="modified residue" description="N6-acetyllysine" evidence="3">
    <location>
        <position position="636"/>
    </location>
</feature>
<feature type="modified residue" description="N6-acetyllysine" evidence="3">
    <location>
        <position position="647"/>
    </location>
</feature>
<feature type="sequence conflict" description="In Ref. 3; ABI29191." evidence="7" ref="3">
    <original>DGKIYQR</original>
    <variation>LQESARG</variation>
    <location>
        <begin position="165"/>
        <end position="171"/>
    </location>
</feature>
<feature type="sequence conflict" description="In Ref. 1; no nucleotide entry." evidence="7" ref="1">
    <original>L</original>
    <variation>S</variation>
    <location>
        <position position="222"/>
    </location>
</feature>
<feature type="sequence conflict" description="In Ref. 1; no nucleotide entry." evidence="7" ref="1">
    <original>I</original>
    <variation>T</variation>
    <location>
        <position position="235"/>
    </location>
</feature>
<feature type="sequence conflict" description="In Ref. 1; no nucleotide entry." evidence="7" ref="1">
    <original>G</original>
    <variation>N</variation>
    <location>
        <position position="358"/>
    </location>
</feature>
<feature type="sequence conflict" description="In Ref. 1; no nucleotide entry." evidence="7" ref="1">
    <original>G</original>
    <variation>E</variation>
    <location>
        <position position="453"/>
    </location>
</feature>
<feature type="sequence conflict" description="In Ref. 2; ABD77326." evidence="7" ref="2">
    <original>S</original>
    <variation>W</variation>
    <location>
        <position position="509"/>
    </location>
</feature>
<feature type="sequence conflict" description="In Ref. 2; ABD77326." evidence="7" ref="2">
    <original>L</original>
    <variation>P</variation>
    <location>
        <position position="566"/>
    </location>
</feature>
<feature type="strand" evidence="9">
    <location>
        <begin position="57"/>
        <end position="61"/>
    </location>
</feature>
<feature type="strand" evidence="9">
    <location>
        <begin position="63"/>
        <end position="67"/>
    </location>
</feature>
<feature type="helix" evidence="9">
    <location>
        <begin position="71"/>
        <end position="82"/>
    </location>
</feature>
<feature type="strand" evidence="9">
    <location>
        <begin position="87"/>
        <end position="93"/>
    </location>
</feature>
<feature type="helix" evidence="9">
    <location>
        <begin position="95"/>
        <end position="97"/>
    </location>
</feature>
<feature type="helix" evidence="9">
    <location>
        <begin position="99"/>
        <end position="102"/>
    </location>
</feature>
<feature type="strand" evidence="9">
    <location>
        <begin position="113"/>
        <end position="115"/>
    </location>
</feature>
<feature type="helix" evidence="9">
    <location>
        <begin position="119"/>
        <end position="129"/>
    </location>
</feature>
<feature type="turn" evidence="9">
    <location>
        <begin position="130"/>
        <end position="132"/>
    </location>
</feature>
<feature type="helix" evidence="9">
    <location>
        <begin position="136"/>
        <end position="156"/>
    </location>
</feature>
<feature type="strand" evidence="9">
    <location>
        <begin position="166"/>
        <end position="168"/>
    </location>
</feature>
<feature type="strand" evidence="9">
    <location>
        <begin position="170"/>
        <end position="178"/>
    </location>
</feature>
<feature type="turn" evidence="9">
    <location>
        <begin position="179"/>
        <end position="182"/>
    </location>
</feature>
<feature type="strand" evidence="9">
    <location>
        <begin position="185"/>
        <end position="190"/>
    </location>
</feature>
<feature type="helix" evidence="9">
    <location>
        <begin position="196"/>
        <end position="208"/>
    </location>
</feature>
<feature type="turn" evidence="15">
    <location>
        <begin position="209"/>
        <end position="212"/>
    </location>
</feature>
<feature type="strand" evidence="9">
    <location>
        <begin position="214"/>
        <end position="217"/>
    </location>
</feature>
<feature type="strand" evidence="9">
    <location>
        <begin position="219"/>
        <end position="227"/>
    </location>
</feature>
<feature type="strand" evidence="9">
    <location>
        <begin position="230"/>
        <end position="238"/>
    </location>
</feature>
<feature type="turn" evidence="9">
    <location>
        <begin position="239"/>
        <end position="241"/>
    </location>
</feature>
<feature type="strand" evidence="9">
    <location>
        <begin position="244"/>
        <end position="248"/>
    </location>
</feature>
<feature type="strand" evidence="9">
    <location>
        <begin position="250"/>
        <end position="254"/>
    </location>
</feature>
<feature type="helix" evidence="9">
    <location>
        <begin position="260"/>
        <end position="262"/>
    </location>
</feature>
<feature type="strand" evidence="9">
    <location>
        <begin position="263"/>
        <end position="268"/>
    </location>
</feature>
<feature type="helix" evidence="9">
    <location>
        <begin position="275"/>
        <end position="282"/>
    </location>
</feature>
<feature type="turn" evidence="15">
    <location>
        <begin position="289"/>
        <end position="291"/>
    </location>
</feature>
<feature type="strand" evidence="9">
    <location>
        <begin position="293"/>
        <end position="297"/>
    </location>
</feature>
<feature type="turn" evidence="9">
    <location>
        <begin position="301"/>
        <end position="303"/>
    </location>
</feature>
<feature type="helix" evidence="9">
    <location>
        <begin position="310"/>
        <end position="314"/>
    </location>
</feature>
<feature type="strand" evidence="9">
    <location>
        <begin position="317"/>
        <end position="319"/>
    </location>
</feature>
<feature type="strand" evidence="11">
    <location>
        <begin position="323"/>
        <end position="325"/>
    </location>
</feature>
<feature type="turn" evidence="14">
    <location>
        <begin position="327"/>
        <end position="329"/>
    </location>
</feature>
<feature type="turn" evidence="9">
    <location>
        <begin position="332"/>
        <end position="336"/>
    </location>
</feature>
<feature type="helix" evidence="9">
    <location>
        <begin position="340"/>
        <end position="353"/>
    </location>
</feature>
<feature type="strand" evidence="14">
    <location>
        <begin position="357"/>
        <end position="361"/>
    </location>
</feature>
<feature type="strand" evidence="9">
    <location>
        <begin position="365"/>
        <end position="367"/>
    </location>
</feature>
<feature type="strand" evidence="10">
    <location>
        <begin position="369"/>
        <end position="371"/>
    </location>
</feature>
<feature type="helix" evidence="9">
    <location>
        <begin position="375"/>
        <end position="378"/>
    </location>
</feature>
<feature type="helix" evidence="9">
    <location>
        <begin position="381"/>
        <end position="391"/>
    </location>
</feature>
<feature type="turn" evidence="9">
    <location>
        <begin position="395"/>
        <end position="397"/>
    </location>
</feature>
<feature type="strand" evidence="15">
    <location>
        <begin position="400"/>
        <end position="402"/>
    </location>
</feature>
<feature type="strand" evidence="9">
    <location>
        <begin position="405"/>
        <end position="409"/>
    </location>
</feature>
<feature type="strand" evidence="9">
    <location>
        <begin position="412"/>
        <end position="415"/>
    </location>
</feature>
<feature type="strand" evidence="9">
    <location>
        <begin position="419"/>
        <end position="425"/>
    </location>
</feature>
<feature type="strand" evidence="9">
    <location>
        <begin position="428"/>
        <end position="437"/>
    </location>
</feature>
<feature type="helix" evidence="13">
    <location>
        <begin position="439"/>
        <end position="441"/>
    </location>
</feature>
<feature type="strand" evidence="14">
    <location>
        <begin position="442"/>
        <end position="444"/>
    </location>
</feature>
<feature type="helix" evidence="9">
    <location>
        <begin position="456"/>
        <end position="474"/>
    </location>
</feature>
<feature type="turn" evidence="9">
    <location>
        <begin position="486"/>
        <end position="489"/>
    </location>
</feature>
<feature type="helix" evidence="9">
    <location>
        <begin position="490"/>
        <end position="500"/>
    </location>
</feature>
<feature type="strand" evidence="9">
    <location>
        <begin position="505"/>
        <end position="507"/>
    </location>
</feature>
<feature type="helix" evidence="9">
    <location>
        <begin position="508"/>
        <end position="522"/>
    </location>
</feature>
<feature type="strand" evidence="9">
    <location>
        <begin position="523"/>
        <end position="527"/>
    </location>
</feature>
<feature type="helix" evidence="9">
    <location>
        <begin position="529"/>
        <end position="545"/>
    </location>
</feature>
<feature type="strand" evidence="9">
    <location>
        <begin position="548"/>
        <end position="550"/>
    </location>
</feature>
<feature type="helix" evidence="9">
    <location>
        <begin position="560"/>
        <end position="584"/>
    </location>
</feature>
<feature type="strand" evidence="12">
    <location>
        <begin position="587"/>
        <end position="589"/>
    </location>
</feature>
<feature type="strand" evidence="9">
    <location>
        <begin position="594"/>
        <end position="596"/>
    </location>
</feature>
<feature type="strand" evidence="9">
    <location>
        <begin position="606"/>
        <end position="608"/>
    </location>
</feature>
<feature type="strand" evidence="9">
    <location>
        <begin position="610"/>
        <end position="613"/>
    </location>
</feature>
<feature type="helix" evidence="9">
    <location>
        <begin position="618"/>
        <end position="620"/>
    </location>
</feature>
<feature type="strand" evidence="9">
    <location>
        <begin position="624"/>
        <end position="630"/>
    </location>
</feature>
<feature type="turn" evidence="9">
    <location>
        <begin position="632"/>
        <end position="634"/>
    </location>
</feature>
<feature type="strand" evidence="9">
    <location>
        <begin position="637"/>
        <end position="642"/>
    </location>
</feature>
<feature type="turn" evidence="9">
    <location>
        <begin position="651"/>
        <end position="653"/>
    </location>
</feature>
<name>SDHA_PIG</name>